<comment type="function">
    <text evidence="1">As a component of the outer core of AMPAR complex, may be involved in synaptic transmission in the central nervous system. In hippocampal neurons, in presynaptic terminals, plays an important role in the final steps of neurotransmitter release, possibly by regulating Ca(2+)-sensing. In the cerebellum, may inhibit SNARE complex formation and down-regulate short-term facilitation.</text>
</comment>
<comment type="subunit">
    <text evidence="2 5 6">Component of the outer core of AMPAR complex. AMPAR complex consists of an inner core made of 4 pore-forming GluA/GRIA proteins (GRIA1, GRIA2, GRIA3 and GRIA4) and 4 major auxiliary subunits arranged in a twofold symmetry. One of the two pairs of distinct binding sites is occupied either by CNIH2, CNIH3 or CACNG2, CACNG3. The other harbors CACNG2, CACNG3, CACNG4, CACNG8 or GSG1L. This inner core of AMPAR complex is complemented by outer core constituents binding directly to the GluA/GRIA proteins at sites distinct from the interaction sites of the inner core constituents. Outer core constituents include at least PRRT1, PRRT2, CKAMP44/SHISA9, FRRS1L and NRN1. The proteins of the inner and outer core serve as a platform for other, more peripherally associated AMPAR constituents. Alone or in combination, these auxiliary subunits control the gating and pharmacology of the AMPAR complex and profoundly impact their biogenesis and protein processing (PubMed:22632720). Interacts with intersectin 1/ITSN1 (PubMed:26797119). Interacts with SNARE complex components, including SNAP25, STX1A, SYT1 and SYT2; this interaction may inhibit SNARE complex formation (By similarity).</text>
</comment>
<comment type="subcellular location">
    <subcellularLocation>
        <location evidence="7">Cell membrane</location>
        <topology evidence="1">Single-pass membrane protein</topology>
    </subcellularLocation>
    <subcellularLocation>
        <location evidence="1">Presynaptic cell membrane</location>
        <topology evidence="1">Single-pass membrane protein</topology>
    </subcellularLocation>
    <subcellularLocation>
        <location evidence="1">Synapse</location>
    </subcellularLocation>
    <subcellularLocation>
        <location evidence="2">Cell projection</location>
        <location evidence="2">Axon</location>
    </subcellularLocation>
    <subcellularLocation>
        <location evidence="7">Cytoplasmic vesicle</location>
        <location evidence="7">Secretory vesicle</location>
        <location evidence="7">Synaptic vesicle membrane</location>
    </subcellularLocation>
    <subcellularLocation>
        <location evidence="7">Postsynaptic density membrane</location>
    </subcellularLocation>
    <subcellularLocation>
        <location evidence="7">Cell projection</location>
        <location evidence="7">Dendritic spine</location>
    </subcellularLocation>
</comment>
<comment type="tissue specificity">
    <text evidence="5 7">Neuron-specific expression throughout the brain, including hippocampus (at protein level).</text>
</comment>
<comment type="similarity">
    <text evidence="8">Belongs to the CD225/Dispanin family.</text>
</comment>
<keyword id="KW-1003">Cell membrane</keyword>
<keyword id="KW-0966">Cell projection</keyword>
<keyword id="KW-0968">Cytoplasmic vesicle</keyword>
<keyword id="KW-0472">Membrane</keyword>
<keyword id="KW-0488">Methylation</keyword>
<keyword id="KW-0597">Phosphoprotein</keyword>
<keyword id="KW-0628">Postsynaptic cell membrane</keyword>
<keyword id="KW-1185">Reference proteome</keyword>
<keyword id="KW-0770">Synapse</keyword>
<keyword id="KW-0812">Transmembrane</keyword>
<keyword id="KW-1133">Transmembrane helix</keyword>
<proteinExistence type="evidence at protein level"/>
<reference key="1">
    <citation type="journal article" date="2004" name="Nature">
        <title>Genome sequence of the Brown Norway rat yields insights into mammalian evolution.</title>
        <authorList>
            <person name="Gibbs R.A."/>
            <person name="Weinstock G.M."/>
            <person name="Metzker M.L."/>
            <person name="Muzny D.M."/>
            <person name="Sodergren E.J."/>
            <person name="Scherer S."/>
            <person name="Scott G."/>
            <person name="Steffen D."/>
            <person name="Worley K.C."/>
            <person name="Burch P.E."/>
            <person name="Okwuonu G."/>
            <person name="Hines S."/>
            <person name="Lewis L."/>
            <person name="Deramo C."/>
            <person name="Delgado O."/>
            <person name="Dugan-Rocha S."/>
            <person name="Miner G."/>
            <person name="Morgan M."/>
            <person name="Hawes A."/>
            <person name="Gill R."/>
            <person name="Holt R.A."/>
            <person name="Adams M.D."/>
            <person name="Amanatides P.G."/>
            <person name="Baden-Tillson H."/>
            <person name="Barnstead M."/>
            <person name="Chin S."/>
            <person name="Evans C.A."/>
            <person name="Ferriera S."/>
            <person name="Fosler C."/>
            <person name="Glodek A."/>
            <person name="Gu Z."/>
            <person name="Jennings D."/>
            <person name="Kraft C.L."/>
            <person name="Nguyen T."/>
            <person name="Pfannkoch C.M."/>
            <person name="Sitter C."/>
            <person name="Sutton G.G."/>
            <person name="Venter J.C."/>
            <person name="Woodage T."/>
            <person name="Smith D."/>
            <person name="Lee H.-M."/>
            <person name="Gustafson E."/>
            <person name="Cahill P."/>
            <person name="Kana A."/>
            <person name="Doucette-Stamm L."/>
            <person name="Weinstock K."/>
            <person name="Fechtel K."/>
            <person name="Weiss R.B."/>
            <person name="Dunn D.M."/>
            <person name="Green E.D."/>
            <person name="Blakesley R.W."/>
            <person name="Bouffard G.G."/>
            <person name="De Jong P.J."/>
            <person name="Osoegawa K."/>
            <person name="Zhu B."/>
            <person name="Marra M."/>
            <person name="Schein J."/>
            <person name="Bosdet I."/>
            <person name="Fjell C."/>
            <person name="Jones S."/>
            <person name="Krzywinski M."/>
            <person name="Mathewson C."/>
            <person name="Siddiqui A."/>
            <person name="Wye N."/>
            <person name="McPherson J."/>
            <person name="Zhao S."/>
            <person name="Fraser C.M."/>
            <person name="Shetty J."/>
            <person name="Shatsman S."/>
            <person name="Geer K."/>
            <person name="Chen Y."/>
            <person name="Abramzon S."/>
            <person name="Nierman W.C."/>
            <person name="Havlak P.H."/>
            <person name="Chen R."/>
            <person name="Durbin K.J."/>
            <person name="Egan A."/>
            <person name="Ren Y."/>
            <person name="Song X.-Z."/>
            <person name="Li B."/>
            <person name="Liu Y."/>
            <person name="Qin X."/>
            <person name="Cawley S."/>
            <person name="Cooney A.J."/>
            <person name="D'Souza L.M."/>
            <person name="Martin K."/>
            <person name="Wu J.Q."/>
            <person name="Gonzalez-Garay M.L."/>
            <person name="Jackson A.R."/>
            <person name="Kalafus K.J."/>
            <person name="McLeod M.P."/>
            <person name="Milosavljevic A."/>
            <person name="Virk D."/>
            <person name="Volkov A."/>
            <person name="Wheeler D.A."/>
            <person name="Zhang Z."/>
            <person name="Bailey J.A."/>
            <person name="Eichler E.E."/>
            <person name="Tuzun E."/>
            <person name="Birney E."/>
            <person name="Mongin E."/>
            <person name="Ureta-Vidal A."/>
            <person name="Woodwark C."/>
            <person name="Zdobnov E."/>
            <person name="Bork P."/>
            <person name="Suyama M."/>
            <person name="Torrents D."/>
            <person name="Alexandersson M."/>
            <person name="Trask B.J."/>
            <person name="Young J.M."/>
            <person name="Huang H."/>
            <person name="Wang H."/>
            <person name="Xing H."/>
            <person name="Daniels S."/>
            <person name="Gietzen D."/>
            <person name="Schmidt J."/>
            <person name="Stevens K."/>
            <person name="Vitt U."/>
            <person name="Wingrove J."/>
            <person name="Camara F."/>
            <person name="Mar Alba M."/>
            <person name="Abril J.F."/>
            <person name="Guigo R."/>
            <person name="Smit A."/>
            <person name="Dubchak I."/>
            <person name="Rubin E.M."/>
            <person name="Couronne O."/>
            <person name="Poliakov A."/>
            <person name="Huebner N."/>
            <person name="Ganten D."/>
            <person name="Goesele C."/>
            <person name="Hummel O."/>
            <person name="Kreitler T."/>
            <person name="Lee Y.-A."/>
            <person name="Monti J."/>
            <person name="Schulz H."/>
            <person name="Zimdahl H."/>
            <person name="Himmelbauer H."/>
            <person name="Lehrach H."/>
            <person name="Jacob H.J."/>
            <person name="Bromberg S."/>
            <person name="Gullings-Handley J."/>
            <person name="Jensen-Seaman M.I."/>
            <person name="Kwitek A.E."/>
            <person name="Lazar J."/>
            <person name="Pasko D."/>
            <person name="Tonellato P.J."/>
            <person name="Twigger S."/>
            <person name="Ponting C.P."/>
            <person name="Duarte J.M."/>
            <person name="Rice S."/>
            <person name="Goodstadt L."/>
            <person name="Beatson S.A."/>
            <person name="Emes R.D."/>
            <person name="Winter E.E."/>
            <person name="Webber C."/>
            <person name="Brandt P."/>
            <person name="Nyakatura G."/>
            <person name="Adetobi M."/>
            <person name="Chiaromonte F."/>
            <person name="Elnitski L."/>
            <person name="Eswara P."/>
            <person name="Hardison R.C."/>
            <person name="Hou M."/>
            <person name="Kolbe D."/>
            <person name="Makova K."/>
            <person name="Miller W."/>
            <person name="Nekrutenko A."/>
            <person name="Riemer C."/>
            <person name="Schwartz S."/>
            <person name="Taylor J."/>
            <person name="Yang S."/>
            <person name="Zhang Y."/>
            <person name="Lindpaintner K."/>
            <person name="Andrews T.D."/>
            <person name="Caccamo M."/>
            <person name="Clamp M."/>
            <person name="Clarke L."/>
            <person name="Curwen V."/>
            <person name="Durbin R.M."/>
            <person name="Eyras E."/>
            <person name="Searle S.M."/>
            <person name="Cooper G.M."/>
            <person name="Batzoglou S."/>
            <person name="Brudno M."/>
            <person name="Sidow A."/>
            <person name="Stone E.A."/>
            <person name="Payseur B.A."/>
            <person name="Bourque G."/>
            <person name="Lopez-Otin C."/>
            <person name="Puente X.S."/>
            <person name="Chakrabarti K."/>
            <person name="Chatterji S."/>
            <person name="Dewey C."/>
            <person name="Pachter L."/>
            <person name="Bray N."/>
            <person name="Yap V.B."/>
            <person name="Caspi A."/>
            <person name="Tesler G."/>
            <person name="Pevzner P.A."/>
            <person name="Haussler D."/>
            <person name="Roskin K.M."/>
            <person name="Baertsch R."/>
            <person name="Clawson H."/>
            <person name="Furey T.S."/>
            <person name="Hinrichs A.S."/>
            <person name="Karolchik D."/>
            <person name="Kent W.J."/>
            <person name="Rosenbloom K.R."/>
            <person name="Trumbower H."/>
            <person name="Weirauch M."/>
            <person name="Cooper D.N."/>
            <person name="Stenson P.D."/>
            <person name="Ma B."/>
            <person name="Brent M."/>
            <person name="Arumugam M."/>
            <person name="Shteynberg D."/>
            <person name="Copley R.R."/>
            <person name="Taylor M.S."/>
            <person name="Riethman H."/>
            <person name="Mudunuri U."/>
            <person name="Peterson J."/>
            <person name="Guyer M."/>
            <person name="Felsenfeld A."/>
            <person name="Old S."/>
            <person name="Mockrin S."/>
            <person name="Collins F.S."/>
        </authorList>
    </citation>
    <scope>NUCLEOTIDE SEQUENCE [LARGE SCALE GENOMIC DNA]</scope>
    <source>
        <strain>Brown Norway</strain>
    </source>
</reference>
<reference key="2">
    <citation type="journal article" date="2012" name="Nat. Commun.">
        <title>Quantitative maps of protein phosphorylation sites across 14 different rat organs and tissues.</title>
        <authorList>
            <person name="Lundby A."/>
            <person name="Secher A."/>
            <person name="Lage K."/>
            <person name="Nordsborg N.B."/>
            <person name="Dmytriyev A."/>
            <person name="Lundby C."/>
            <person name="Olsen J.V."/>
        </authorList>
    </citation>
    <scope>PHOSPHORYLATION [LARGE SCALE ANALYSIS] AT THR-74; THR-78 AND SER-242</scope>
    <scope>IDENTIFICATION BY MASS SPECTROMETRY [LARGE SCALE ANALYSIS]</scope>
</reference>
<reference key="3">
    <citation type="journal article" date="2012" name="Neuron">
        <title>High-resolution proteomics unravel architecture and molecular diversity of native AMPA receptor complexes.</title>
        <authorList>
            <person name="Schwenk J."/>
            <person name="Harmel N."/>
            <person name="Brechet A."/>
            <person name="Zolles G."/>
            <person name="Berkefeld H."/>
            <person name="Muller C.S."/>
            <person name="Bildl W."/>
            <person name="Baehrens D."/>
            <person name="Huber B."/>
            <person name="Kulik A."/>
            <person name="Klocker N."/>
            <person name="Schulte U."/>
            <person name="Fakler B."/>
        </authorList>
    </citation>
    <scope>IDENTIFICATION IN AMPAR COMPLEX</scope>
    <scope>SUBCELLULAR LOCATION</scope>
    <scope>TISSUE SPECIFICITY</scope>
</reference>
<reference key="4">
    <citation type="journal article" date="2016" name="J. Biol. Chem.">
        <title>A Novel Topology of Proline-rich Transmembrane Protein 2 (PRRT2): hints for an intracellular function at the synapse.</title>
        <authorList>
            <person name="Rossi P."/>
            <person name="Sterlini B."/>
            <person name="Castroflorio E."/>
            <person name="Marte A."/>
            <person name="Onofri F."/>
            <person name="Valtorta F."/>
            <person name="Maragliano L."/>
            <person name="Corradi A."/>
            <person name="Benfenati F."/>
        </authorList>
    </citation>
    <scope>INTERACTION WITH ITSN1</scope>
</reference>
<reference key="5">
    <citation type="journal article" date="2016" name="Oncotarget">
        <title>PRRT2 mutations lead to neuronal dysfunction and neurodevelopmental defects.</title>
        <authorList>
            <person name="Liu Y.T."/>
            <person name="Nian F.S."/>
            <person name="Chou W.J."/>
            <person name="Tai C.Y."/>
            <person name="Kwan S.Y."/>
            <person name="Chen C."/>
            <person name="Kuo P.W."/>
            <person name="Lin P.H."/>
            <person name="Chen C.Y."/>
            <person name="Huang C.W."/>
            <person name="Lee Y.C."/>
            <person name="Soong B.W."/>
            <person name="Tsai J.W."/>
        </authorList>
    </citation>
    <scope>SUBCELLULAR LOCATION</scope>
    <scope>TISSUE SPECIFICITY</scope>
</reference>
<accession>D3ZFB6</accession>
<name>PRRT2_RAT</name>
<sequence>MAASSSEVSEMKGVEDSSNTHSEGPRHSEEGMGPVQVVAENLDQPEALQSGPDTTAAPVDSGPKAELAPETTETPVETPETVQATDLSVNPGEDSKTCPSPKEACQEPASRPEVNREATAEQGAEQQSAAPPEPTSEQALQLNTQSDPQPTSQPPPKPPLQAEPPTQENPTTEVLTESTGEKQENGAVVPLQAGDGEEGPAPQPHSPPSTKTPPANGAPPRVLQKLVEEDRIGRAHGGHPGSPRGSLSRHPSSQLAGPGVEGGEGTQKPRDYIILAILSCFCPMWPVNIVAFAYAVMSRNSLQQGDVDGAQRLGRVAKLLSIVALVGGVLIIIASCVINLGVYK</sequence>
<evidence type="ECO:0000250" key="1">
    <source>
        <dbReference type="UniProtKB" id="E9PUL5"/>
    </source>
</evidence>
<evidence type="ECO:0000250" key="2">
    <source>
        <dbReference type="UniProtKB" id="Q7Z6L0"/>
    </source>
</evidence>
<evidence type="ECO:0000255" key="3"/>
<evidence type="ECO:0000256" key="4">
    <source>
        <dbReference type="SAM" id="MobiDB-lite"/>
    </source>
</evidence>
<evidence type="ECO:0000269" key="5">
    <source>
    </source>
</evidence>
<evidence type="ECO:0000269" key="6">
    <source>
    </source>
</evidence>
<evidence type="ECO:0000269" key="7">
    <source>
    </source>
</evidence>
<evidence type="ECO:0000305" key="8"/>
<evidence type="ECO:0007744" key="9">
    <source>
    </source>
</evidence>
<feature type="chain" id="PRO_0000420687" description="Proline-rich transmembrane protein 2">
    <location>
        <begin position="1"/>
        <end position="344"/>
    </location>
</feature>
<feature type="topological domain" description="Cytoplasmic" evidence="1 3">
    <location>
        <begin position="1"/>
        <end position="272"/>
    </location>
</feature>
<feature type="intramembrane region" description="Helical" evidence="1 3">
    <location>
        <begin position="273"/>
        <end position="293"/>
    </location>
</feature>
<feature type="topological domain" description="Cytoplasmic" evidence="1 3">
    <location>
        <begin position="294"/>
        <end position="321"/>
    </location>
</feature>
<feature type="transmembrane region" description="Helical" evidence="1 3">
    <location>
        <begin position="322"/>
        <end position="342"/>
    </location>
</feature>
<feature type="topological domain" description="Extracellular" evidence="1 3">
    <location>
        <begin position="343"/>
        <end position="344"/>
    </location>
</feature>
<feature type="region of interest" description="Disordered" evidence="4">
    <location>
        <begin position="1"/>
        <end position="220"/>
    </location>
</feature>
<feature type="region of interest" description="Disordered" evidence="4">
    <location>
        <begin position="233"/>
        <end position="265"/>
    </location>
</feature>
<feature type="compositionally biased region" description="Low complexity" evidence="4">
    <location>
        <begin position="69"/>
        <end position="82"/>
    </location>
</feature>
<feature type="compositionally biased region" description="Polar residues" evidence="4">
    <location>
        <begin position="124"/>
        <end position="143"/>
    </location>
</feature>
<feature type="compositionally biased region" description="Pro residues" evidence="4">
    <location>
        <begin position="151"/>
        <end position="162"/>
    </location>
</feature>
<feature type="compositionally biased region" description="Polar residues" evidence="4">
    <location>
        <begin position="168"/>
        <end position="178"/>
    </location>
</feature>
<feature type="compositionally biased region" description="Pro residues" evidence="4">
    <location>
        <begin position="201"/>
        <end position="211"/>
    </location>
</feature>
<feature type="modified residue" description="Phosphoserine" evidence="1">
    <location>
        <position position="28"/>
    </location>
</feature>
<feature type="modified residue" description="Phosphothreonine" evidence="9">
    <location>
        <position position="74"/>
    </location>
</feature>
<feature type="modified residue" description="Phosphothreonine" evidence="9">
    <location>
        <position position="78"/>
    </location>
</feature>
<feature type="modified residue" description="Phosphoserine" evidence="9">
    <location>
        <position position="242"/>
    </location>
</feature>
<feature type="modified residue" description="Omega-N-methylarginine" evidence="1">
    <location>
        <position position="244"/>
    </location>
</feature>
<feature type="modified residue" description="Phosphoserine" evidence="1">
    <location>
        <position position="252"/>
    </location>
</feature>
<feature type="modified residue" description="Phosphoserine" evidence="1">
    <location>
        <position position="253"/>
    </location>
</feature>
<protein>
    <recommendedName>
        <fullName>Proline-rich transmembrane protein 2</fullName>
    </recommendedName>
    <alternativeName>
        <fullName>Dispanin subfamily B member 3</fullName>
        <shortName>DSPB3</shortName>
    </alternativeName>
</protein>
<gene>
    <name type="primary">Prrt2</name>
</gene>
<organism>
    <name type="scientific">Rattus norvegicus</name>
    <name type="common">Rat</name>
    <dbReference type="NCBI Taxonomy" id="10116"/>
    <lineage>
        <taxon>Eukaryota</taxon>
        <taxon>Metazoa</taxon>
        <taxon>Chordata</taxon>
        <taxon>Craniata</taxon>
        <taxon>Vertebrata</taxon>
        <taxon>Euteleostomi</taxon>
        <taxon>Mammalia</taxon>
        <taxon>Eutheria</taxon>
        <taxon>Euarchontoglires</taxon>
        <taxon>Glires</taxon>
        <taxon>Rodentia</taxon>
        <taxon>Myomorpha</taxon>
        <taxon>Muroidea</taxon>
        <taxon>Muridae</taxon>
        <taxon>Murinae</taxon>
        <taxon>Rattus</taxon>
    </lineage>
</organism>
<dbReference type="RefSeq" id="NP_001263399.1">
    <property type="nucleotide sequence ID" value="NM_001276470.1"/>
</dbReference>
<dbReference type="CORUM" id="D3ZFB6"/>
<dbReference type="FunCoup" id="D3ZFB6">
    <property type="interactions" value="874"/>
</dbReference>
<dbReference type="STRING" id="10116.ENSRNOP00000050996"/>
<dbReference type="iPTMnet" id="D3ZFB6"/>
<dbReference type="PhosphoSitePlus" id="D3ZFB6"/>
<dbReference type="PaxDb" id="10116-ENSRNOP00000050996"/>
<dbReference type="Ensembl" id="ENSRNOT00000049044.6">
    <property type="protein sequence ID" value="ENSRNOP00000050996.3"/>
    <property type="gene ID" value="ENSRNOG00000029366.6"/>
</dbReference>
<dbReference type="GeneID" id="361651"/>
<dbReference type="KEGG" id="rno:361651"/>
<dbReference type="UCSC" id="RGD:1564195">
    <property type="organism name" value="rat"/>
</dbReference>
<dbReference type="AGR" id="RGD:1564195"/>
<dbReference type="CTD" id="112476"/>
<dbReference type="RGD" id="1564195">
    <property type="gene designation" value="Prrt2"/>
</dbReference>
<dbReference type="eggNOG" id="ENOG502S2U1">
    <property type="taxonomic scope" value="Eukaryota"/>
</dbReference>
<dbReference type="GeneTree" id="ENSGT00940000161103"/>
<dbReference type="HOGENOM" id="CLU_070349_0_0_1"/>
<dbReference type="InParanoid" id="D3ZFB6"/>
<dbReference type="OrthoDB" id="89121at9989"/>
<dbReference type="PhylomeDB" id="D3ZFB6"/>
<dbReference type="TreeFam" id="TF331357"/>
<dbReference type="PRO" id="PR:D3ZFB6"/>
<dbReference type="Proteomes" id="UP000002494">
    <property type="component" value="Chromosome 1"/>
</dbReference>
<dbReference type="Bgee" id="ENSRNOG00000029366">
    <property type="expression patterns" value="Expressed in cerebellum and 17 other cell types or tissues"/>
</dbReference>
<dbReference type="GO" id="GO:0043679">
    <property type="term" value="C:axon terminus"/>
    <property type="evidence" value="ECO:0000250"/>
    <property type="project" value="UniProtKB"/>
</dbReference>
<dbReference type="GO" id="GO:0043197">
    <property type="term" value="C:dendritic spine"/>
    <property type="evidence" value="ECO:0007669"/>
    <property type="project" value="UniProtKB-SubCell"/>
</dbReference>
<dbReference type="GO" id="GO:0098978">
    <property type="term" value="C:glutamatergic synapse"/>
    <property type="evidence" value="ECO:0000266"/>
    <property type="project" value="RGD"/>
</dbReference>
<dbReference type="GO" id="GO:0016020">
    <property type="term" value="C:membrane"/>
    <property type="evidence" value="ECO:0000266"/>
    <property type="project" value="RGD"/>
</dbReference>
<dbReference type="GO" id="GO:0043005">
    <property type="term" value="C:neuron projection"/>
    <property type="evidence" value="ECO:0000314"/>
    <property type="project" value="MGI"/>
</dbReference>
<dbReference type="GO" id="GO:0005886">
    <property type="term" value="C:plasma membrane"/>
    <property type="evidence" value="ECO:0000266"/>
    <property type="project" value="RGD"/>
</dbReference>
<dbReference type="GO" id="GO:0098839">
    <property type="term" value="C:postsynaptic density membrane"/>
    <property type="evidence" value="ECO:0007669"/>
    <property type="project" value="UniProtKB-SubCell"/>
</dbReference>
<dbReference type="GO" id="GO:0098793">
    <property type="term" value="C:presynapse"/>
    <property type="evidence" value="ECO:0000250"/>
    <property type="project" value="UniProtKB"/>
</dbReference>
<dbReference type="GO" id="GO:0042734">
    <property type="term" value="C:presynaptic membrane"/>
    <property type="evidence" value="ECO:0000250"/>
    <property type="project" value="UniProtKB"/>
</dbReference>
<dbReference type="GO" id="GO:0008021">
    <property type="term" value="C:synaptic vesicle"/>
    <property type="evidence" value="ECO:0000250"/>
    <property type="project" value="UniProtKB"/>
</dbReference>
<dbReference type="GO" id="GO:0030672">
    <property type="term" value="C:synaptic vesicle membrane"/>
    <property type="evidence" value="ECO:0007669"/>
    <property type="project" value="UniProtKB-SubCell"/>
</dbReference>
<dbReference type="GO" id="GO:0031982">
    <property type="term" value="C:vesicle"/>
    <property type="evidence" value="ECO:0000250"/>
    <property type="project" value="UniProtKB"/>
</dbReference>
<dbReference type="GO" id="GO:0017124">
    <property type="term" value="F:SH3 domain binding"/>
    <property type="evidence" value="ECO:0000314"/>
    <property type="project" value="MGI"/>
</dbReference>
<dbReference type="GO" id="GO:0017075">
    <property type="term" value="F:syntaxin-1 binding"/>
    <property type="evidence" value="ECO:0000250"/>
    <property type="project" value="UniProtKB"/>
</dbReference>
<dbReference type="GO" id="GO:1905513">
    <property type="term" value="P:negative regulation of short-term synaptic potentiation"/>
    <property type="evidence" value="ECO:0000250"/>
    <property type="project" value="UniProtKB"/>
</dbReference>
<dbReference type="GO" id="GO:0035544">
    <property type="term" value="P:negative regulation of SNARE complex assembly"/>
    <property type="evidence" value="ECO:0000250"/>
    <property type="project" value="UniProtKB"/>
</dbReference>
<dbReference type="GO" id="GO:0050884">
    <property type="term" value="P:neuromuscular process controlling posture"/>
    <property type="evidence" value="ECO:0000266"/>
    <property type="project" value="RGD"/>
</dbReference>
<dbReference type="GO" id="GO:0150037">
    <property type="term" value="P:regulation of calcium-dependent activation of synaptic vesicle fusion"/>
    <property type="evidence" value="ECO:0000266"/>
    <property type="project" value="RGD"/>
</dbReference>
<dbReference type="GO" id="GO:0031629">
    <property type="term" value="P:synaptic vesicle fusion to presynaptic active zone membrane"/>
    <property type="evidence" value="ECO:0000250"/>
    <property type="project" value="UniProtKB"/>
</dbReference>
<dbReference type="InterPro" id="IPR051423">
    <property type="entry name" value="CD225/Dispanin"/>
</dbReference>
<dbReference type="InterPro" id="IPR007593">
    <property type="entry name" value="CD225/Dispanin_fam"/>
</dbReference>
<dbReference type="PANTHER" id="PTHR14948">
    <property type="entry name" value="NG5"/>
    <property type="match status" value="1"/>
</dbReference>
<dbReference type="PANTHER" id="PTHR14948:SF20">
    <property type="entry name" value="PROLINE-RICH TRANSMEMBRANE PROTEIN 2"/>
    <property type="match status" value="1"/>
</dbReference>
<dbReference type="Pfam" id="PF04505">
    <property type="entry name" value="CD225"/>
    <property type="match status" value="1"/>
</dbReference>